<protein>
    <recommendedName>
        <fullName>Troponin T, cardiac muscle</fullName>
        <shortName>TnTc</shortName>
    </recommendedName>
    <alternativeName>
        <fullName>Cardiac muscle troponin T</fullName>
        <shortName>cTnT</shortName>
    </alternativeName>
</protein>
<accession>P13789</accession>
<accession>P13790</accession>
<organism>
    <name type="scientific">Bos taurus</name>
    <name type="common">Bovine</name>
    <dbReference type="NCBI Taxonomy" id="9913"/>
    <lineage>
        <taxon>Eukaryota</taxon>
        <taxon>Metazoa</taxon>
        <taxon>Chordata</taxon>
        <taxon>Craniata</taxon>
        <taxon>Vertebrata</taxon>
        <taxon>Euteleostomi</taxon>
        <taxon>Mammalia</taxon>
        <taxon>Eutheria</taxon>
        <taxon>Laurasiatheria</taxon>
        <taxon>Artiodactyla</taxon>
        <taxon>Ruminantia</taxon>
        <taxon>Pecora</taxon>
        <taxon>Bovidae</taxon>
        <taxon>Bovinae</taxon>
        <taxon>Bos</taxon>
    </lineage>
</organism>
<name>TNNT2_BOVIN</name>
<comment type="function">
    <text>Troponin T is the tropomyosin-binding subunit of troponin, the thin filament regulatory complex which confers calcium-sensitivity to striated muscle actomyosin ATPase activity.</text>
</comment>
<comment type="alternative products">
    <event type="alternative splicing"/>
    <isoform>
        <id>P13789-1</id>
        <name>1</name>
        <sequence type="displayed"/>
    </isoform>
    <isoform>
        <id>P13789-2</id>
        <name>2</name>
        <sequence type="described" ref="VSP_006631"/>
    </isoform>
</comment>
<comment type="PTM">
    <text>The N-terminus is blocked.</text>
</comment>
<comment type="PTM">
    <text evidence="1">Phosphorylation at Thr-200 by PRKCA induces significant reduction in myofilament calcium sensitivity and actomyosin ATPase activity.</text>
</comment>
<comment type="similarity">
    <text evidence="6">Belongs to the troponin T family.</text>
</comment>
<proteinExistence type="evidence at protein level"/>
<keyword id="KW-0007">Acetylation</keyword>
<keyword id="KW-0025">Alternative splicing</keyword>
<keyword id="KW-0903">Direct protein sequencing</keyword>
<keyword id="KW-0514">Muscle protein</keyword>
<keyword id="KW-0597">Phosphoprotein</keyword>
<keyword id="KW-1185">Reference proteome</keyword>
<dbReference type="PIR" id="A28008">
    <property type="entry name" value="A28008"/>
</dbReference>
<dbReference type="FunCoup" id="P13789">
    <property type="interactions" value="42"/>
</dbReference>
<dbReference type="IntAct" id="P13789">
    <property type="interactions" value="1"/>
</dbReference>
<dbReference type="MINT" id="P13789"/>
<dbReference type="STRING" id="9913.ENSBTAP00000055971"/>
<dbReference type="iPTMnet" id="P13789"/>
<dbReference type="PaxDb" id="9913-ENSBTAP00000054984"/>
<dbReference type="eggNOG" id="KOG3634">
    <property type="taxonomic scope" value="Eukaryota"/>
</dbReference>
<dbReference type="InParanoid" id="P13789"/>
<dbReference type="Proteomes" id="UP000009136">
    <property type="component" value="Unplaced"/>
</dbReference>
<dbReference type="GO" id="GO:0005861">
    <property type="term" value="C:troponin complex"/>
    <property type="evidence" value="ECO:0000318"/>
    <property type="project" value="GO_Central"/>
</dbReference>
<dbReference type="GO" id="GO:0005523">
    <property type="term" value="F:tropomyosin binding"/>
    <property type="evidence" value="ECO:0000318"/>
    <property type="project" value="GO_Central"/>
</dbReference>
<dbReference type="GO" id="GO:0030172">
    <property type="term" value="F:troponin C binding"/>
    <property type="evidence" value="ECO:0000318"/>
    <property type="project" value="GO_Central"/>
</dbReference>
<dbReference type="GO" id="GO:0031013">
    <property type="term" value="F:troponin I binding"/>
    <property type="evidence" value="ECO:0000318"/>
    <property type="project" value="GO_Central"/>
</dbReference>
<dbReference type="GO" id="GO:0060048">
    <property type="term" value="P:cardiac muscle contraction"/>
    <property type="evidence" value="ECO:0000318"/>
    <property type="project" value="GO_Central"/>
</dbReference>
<dbReference type="GO" id="GO:0006937">
    <property type="term" value="P:regulation of muscle contraction"/>
    <property type="evidence" value="ECO:0007669"/>
    <property type="project" value="InterPro"/>
</dbReference>
<dbReference type="FunFam" id="1.20.5.350:FF:000001">
    <property type="entry name" value="Troponin T, fast skeletal muscle"/>
    <property type="match status" value="1"/>
</dbReference>
<dbReference type="Gene3D" id="1.20.5.350">
    <property type="match status" value="1"/>
</dbReference>
<dbReference type="InterPro" id="IPR027707">
    <property type="entry name" value="TNNT"/>
</dbReference>
<dbReference type="InterPro" id="IPR001978">
    <property type="entry name" value="Troponin"/>
</dbReference>
<dbReference type="InterPro" id="IPR038077">
    <property type="entry name" value="Troponin_sf"/>
</dbReference>
<dbReference type="PANTHER" id="PTHR11521">
    <property type="entry name" value="TROPONIN T"/>
    <property type="match status" value="1"/>
</dbReference>
<dbReference type="PANTHER" id="PTHR11521:SF5">
    <property type="entry name" value="TROPONIN T, CARDIAC MUSCLE"/>
    <property type="match status" value="1"/>
</dbReference>
<dbReference type="Pfam" id="PF00992">
    <property type="entry name" value="Troponin"/>
    <property type="match status" value="2"/>
</dbReference>
<dbReference type="SUPFAM" id="SSF90250">
    <property type="entry name" value="Troponin coil-coiled subunits"/>
    <property type="match status" value="1"/>
</dbReference>
<feature type="initiator methionine" description="Removed" evidence="2">
    <location>
        <position position="1"/>
    </location>
</feature>
<feature type="chain" id="PRO_0000186172" description="Troponin T, cardiac muscle">
    <location>
        <begin position="2"/>
        <end position="285"/>
    </location>
</feature>
<feature type="region of interest" description="Disordered" evidence="4">
    <location>
        <begin position="1"/>
        <end position="83"/>
    </location>
</feature>
<feature type="region of interest" description="Disordered" evidence="4">
    <location>
        <begin position="111"/>
        <end position="206"/>
    </location>
</feature>
<feature type="compositionally biased region" description="Acidic residues" evidence="4">
    <location>
        <begin position="1"/>
        <end position="58"/>
    </location>
</feature>
<feature type="compositionally biased region" description="Pro residues" evidence="4">
    <location>
        <begin position="66"/>
        <end position="77"/>
    </location>
</feature>
<feature type="compositionally biased region" description="Basic and acidic residues" evidence="4">
    <location>
        <begin position="111"/>
        <end position="171"/>
    </location>
</feature>
<feature type="compositionally biased region" description="Basic and acidic residues" evidence="4">
    <location>
        <begin position="190"/>
        <end position="206"/>
    </location>
</feature>
<feature type="modified residue" description="N-acetylserine" evidence="2 6">
    <location>
        <position position="2"/>
    </location>
</feature>
<feature type="modified residue" description="Phosphoserine; by CK2" evidence="5">
    <location>
        <position position="2"/>
    </location>
</feature>
<feature type="modified residue" description="Phosphothreonine; by PKC/PRKCA" evidence="7">
    <location>
        <position position="191"/>
    </location>
</feature>
<feature type="modified residue" description="Phosphoserine; by PKC/PRKCA" evidence="3">
    <location>
        <position position="195"/>
    </location>
</feature>
<feature type="modified residue" description="Phosphothreonine; by PKC/PRKCA and RAF1" evidence="7">
    <location>
        <position position="200"/>
    </location>
</feature>
<feature type="modified residue" description="Phosphothreonine; by PKC/PRKCA" evidence="7">
    <location>
        <position position="281"/>
    </location>
</feature>
<feature type="splice variant" id="VSP_006631" description="In isoform 2." evidence="6">
    <original>AAEEEH</original>
    <variation>N</variation>
    <location>
        <begin position="17"/>
        <end position="22"/>
    </location>
</feature>
<gene>
    <name type="primary">TNNT2</name>
</gene>
<evidence type="ECO:0000250" key="1"/>
<evidence type="ECO:0000250" key="2">
    <source>
        <dbReference type="UniProtKB" id="P09741"/>
    </source>
</evidence>
<evidence type="ECO:0000250" key="3">
    <source>
        <dbReference type="UniProtKB" id="P50752"/>
    </source>
</evidence>
<evidence type="ECO:0000256" key="4">
    <source>
        <dbReference type="SAM" id="MobiDB-lite"/>
    </source>
</evidence>
<evidence type="ECO:0000269" key="5">
    <source>
    </source>
</evidence>
<evidence type="ECO:0000305" key="6"/>
<evidence type="ECO:0000305" key="7">
    <source>
    </source>
</evidence>
<reference key="1">
    <citation type="journal article" date="1987" name="Biochemistry">
        <title>Bovine cardiac troponin T: amino acid sequences of the two isoforms.</title>
        <authorList>
            <person name="Leszyk J."/>
            <person name="Dumaswala R."/>
            <person name="Potter J.D."/>
            <person name="Gusev N.B."/>
            <person name="Verin A.D."/>
            <person name="Tobacman L.S."/>
            <person name="Collins J.H."/>
        </authorList>
    </citation>
    <scope>PROTEIN SEQUENCE OF 2-285</scope>
</reference>
<reference key="2">
    <citation type="journal article" date="1983" name="Biochem. J.">
        <title>Some properties of cardiac troponin T structure.</title>
        <authorList>
            <person name="Gusev N.B."/>
            <person name="Barskaya N.V."/>
            <person name="Verin A.D."/>
            <person name="Duzhenkova I.V."/>
            <person name="Khuchua Z.A."/>
            <person name="Zheltova A.O."/>
        </authorList>
    </citation>
    <scope>PROTEIN SEQUENCE OF 2-6 AND 284-285</scope>
    <scope>PHOSPHORYLATION AT SER-2</scope>
    <scope>BLOCKAGE OF N-TERMINUS</scope>
</reference>
<reference key="3">
    <citation type="journal article" date="1995" name="Biochim. Biophys. Acta">
        <title>A site phosphorylated in bovine cardiac troponin T by cardiac CaM kinase II.</title>
        <authorList>
            <person name="Jaquet K."/>
            <person name="Fukunaga K."/>
            <person name="Miyamoto E."/>
            <person name="Meyer H.E."/>
        </authorList>
    </citation>
    <scope>PROTEIN SEQUENCE OF 181-201</scope>
    <scope>PHOSPHORYLATION</scope>
</reference>
<reference key="4">
    <citation type="journal article" date="1989" name="J. Biol. Chem.">
        <title>Identification of sites phosphorylated in bovine cardiac troponin I and troponin T by protein kinase C and comparative substrate activity of synthetic peptides containing the phosphorylation sites.</title>
        <authorList>
            <person name="Noland T.A. Jr."/>
            <person name="Raynor R.L."/>
            <person name="Kuo J.F."/>
        </authorList>
    </citation>
    <scope>PHOSPHORYLATION AT THR-191; THR-200 AND THR-281</scope>
</reference>
<sequence length="285" mass="33914">MSDVEEAVEEYEEQEEAAEEEHEEAVEEEAGGEAEAGEPCTAEDGEEEEGREAEDGPVEEFKPKPRPFMPNLVPPKIPDGERVDFDDIHRKRMEKDLNELQTLIEAHFENRKKEEEELVSLKDRIEKRRAERAEQQRIRAEREKERQTRLAEERARREEEESRRKAEDEARKKKALSNMMHFGGYIQKAQTERKSGKRQTEREKKKKILAERRKVLAIDHLNEDQLREKAKELWQMIYDLEAEKFDLQEKFKQQKYEINVLRNRINDNQKVSKTRGKAKVTGRWK</sequence>